<evidence type="ECO:0000255" key="1">
    <source>
        <dbReference type="HAMAP-Rule" id="MF_01543"/>
    </source>
</evidence>
<accession>Q1GE26</accession>
<protein>
    <recommendedName>
        <fullName evidence="1">Formate--tetrahydrofolate ligase</fullName>
        <ecNumber evidence="1">6.3.4.3</ecNumber>
    </recommendedName>
    <alternativeName>
        <fullName evidence="1">Formyltetrahydrofolate synthetase</fullName>
        <shortName evidence="1">FHS</shortName>
        <shortName evidence="1">FTHFS</shortName>
    </alternativeName>
</protein>
<gene>
    <name evidence="1" type="primary">fhs</name>
    <name type="ordered locus">TM1040_2358</name>
</gene>
<sequence length="558" mass="59751">MSYKSDIEIARAANKLPIQEIGAKLGMKNDDLLPYGHDKAKVSQEFINSVQGNEDGKLVLVTAINPTPAGEGKTTTTVGLGDGLNRIGKNAMICIREASLGPNFGMKGGAAGGGMAQVVPMEEMNLHFTGDFHAITSAHSLLSAMIDNHIYWGNEQEIDIRRVAWRRVVDMNDRALRQITASLGGVSNGFPRETGFDITVASEVMAILCLANDLKDLEKRLGDIIVAYRRDKTPVYCRDIKAEGAMTVLLKDAMQPNLVQTLENNPAFVHGGPFANIAHGCNSVIATKTALKVADYVVTEAGFGADLGAEKFMNIKCRKAGIAPSAVVVVATVRAMKMNGGVAKADLGAENVEAVKNGCANLGRHIENVKSFGVPAVVAINHFVTDTDAEINAVKEYVASHGVEAILSRHWELGSEGSAPLAEKVVELVEGGGANFGPLYPDEMPLFEKIETIAKRIYRADEVLADAKIRNQLKEWEEAGYGHLPVCMAKTQYSFSTDPNLRGAPTGHSVPVREVRLSAGAGFIVVVCGEIMTMPGLPRTPAAESICLNEEGLIEGLF</sequence>
<keyword id="KW-0067">ATP-binding</keyword>
<keyword id="KW-0436">Ligase</keyword>
<keyword id="KW-0547">Nucleotide-binding</keyword>
<keyword id="KW-0554">One-carbon metabolism</keyword>
<keyword id="KW-1185">Reference proteome</keyword>
<name>FTHS_RUEST</name>
<dbReference type="EC" id="6.3.4.3" evidence="1"/>
<dbReference type="EMBL" id="CP000377">
    <property type="protein sequence ID" value="ABF65090.1"/>
    <property type="molecule type" value="Genomic_DNA"/>
</dbReference>
<dbReference type="RefSeq" id="WP_011539678.1">
    <property type="nucleotide sequence ID" value="NC_008044.1"/>
</dbReference>
<dbReference type="SMR" id="Q1GE26"/>
<dbReference type="STRING" id="292414.TM1040_2358"/>
<dbReference type="KEGG" id="sit:TM1040_2358"/>
<dbReference type="eggNOG" id="COG2759">
    <property type="taxonomic scope" value="Bacteria"/>
</dbReference>
<dbReference type="HOGENOM" id="CLU_003601_3_3_5"/>
<dbReference type="OrthoDB" id="9761733at2"/>
<dbReference type="UniPathway" id="UPA00193"/>
<dbReference type="Proteomes" id="UP000000636">
    <property type="component" value="Chromosome"/>
</dbReference>
<dbReference type="GO" id="GO:0005524">
    <property type="term" value="F:ATP binding"/>
    <property type="evidence" value="ECO:0007669"/>
    <property type="project" value="UniProtKB-UniRule"/>
</dbReference>
<dbReference type="GO" id="GO:0004329">
    <property type="term" value="F:formate-tetrahydrofolate ligase activity"/>
    <property type="evidence" value="ECO:0007669"/>
    <property type="project" value="UniProtKB-UniRule"/>
</dbReference>
<dbReference type="GO" id="GO:0035999">
    <property type="term" value="P:tetrahydrofolate interconversion"/>
    <property type="evidence" value="ECO:0007669"/>
    <property type="project" value="UniProtKB-UniRule"/>
</dbReference>
<dbReference type="CDD" id="cd00477">
    <property type="entry name" value="FTHFS"/>
    <property type="match status" value="1"/>
</dbReference>
<dbReference type="FunFam" id="3.30.1510.10:FF:000001">
    <property type="entry name" value="Formate--tetrahydrofolate ligase"/>
    <property type="match status" value="1"/>
</dbReference>
<dbReference type="FunFam" id="3.10.410.10:FF:000001">
    <property type="entry name" value="Putative formate--tetrahydrofolate ligase"/>
    <property type="match status" value="1"/>
</dbReference>
<dbReference type="Gene3D" id="3.30.1510.10">
    <property type="entry name" value="Domain 2, N(10)-formyltetrahydrofolate synthetase"/>
    <property type="match status" value="1"/>
</dbReference>
<dbReference type="Gene3D" id="3.10.410.10">
    <property type="entry name" value="Formyltetrahydrofolate synthetase, domain 3"/>
    <property type="match status" value="1"/>
</dbReference>
<dbReference type="Gene3D" id="3.40.50.300">
    <property type="entry name" value="P-loop containing nucleotide triphosphate hydrolases"/>
    <property type="match status" value="1"/>
</dbReference>
<dbReference type="HAMAP" id="MF_01543">
    <property type="entry name" value="FTHFS"/>
    <property type="match status" value="1"/>
</dbReference>
<dbReference type="InterPro" id="IPR000559">
    <property type="entry name" value="Formate_THF_ligase"/>
</dbReference>
<dbReference type="InterPro" id="IPR020628">
    <property type="entry name" value="Formate_THF_ligase_CS"/>
</dbReference>
<dbReference type="InterPro" id="IPR027417">
    <property type="entry name" value="P-loop_NTPase"/>
</dbReference>
<dbReference type="NCBIfam" id="NF010030">
    <property type="entry name" value="PRK13505.1"/>
    <property type="match status" value="1"/>
</dbReference>
<dbReference type="Pfam" id="PF01268">
    <property type="entry name" value="FTHFS"/>
    <property type="match status" value="1"/>
</dbReference>
<dbReference type="SUPFAM" id="SSF52540">
    <property type="entry name" value="P-loop containing nucleoside triphosphate hydrolases"/>
    <property type="match status" value="1"/>
</dbReference>
<dbReference type="PROSITE" id="PS00722">
    <property type="entry name" value="FTHFS_2"/>
    <property type="match status" value="1"/>
</dbReference>
<organism>
    <name type="scientific">Ruegeria sp. (strain TM1040)</name>
    <name type="common">Silicibacter sp.</name>
    <dbReference type="NCBI Taxonomy" id="292414"/>
    <lineage>
        <taxon>Bacteria</taxon>
        <taxon>Pseudomonadati</taxon>
        <taxon>Pseudomonadota</taxon>
        <taxon>Alphaproteobacteria</taxon>
        <taxon>Rhodobacterales</taxon>
        <taxon>Roseobacteraceae</taxon>
        <taxon>Ruegeria</taxon>
    </lineage>
</organism>
<proteinExistence type="inferred from homology"/>
<feature type="chain" id="PRO_0000300542" description="Formate--tetrahydrofolate ligase">
    <location>
        <begin position="1"/>
        <end position="558"/>
    </location>
</feature>
<feature type="binding site" evidence="1">
    <location>
        <begin position="67"/>
        <end position="74"/>
    </location>
    <ligand>
        <name>ATP</name>
        <dbReference type="ChEBI" id="CHEBI:30616"/>
    </ligand>
</feature>
<reference key="1">
    <citation type="submission" date="2006-05" db="EMBL/GenBank/DDBJ databases">
        <title>Complete sequence of chromosome of Silicibacter sp. TM1040.</title>
        <authorList>
            <consortium name="US DOE Joint Genome Institute"/>
            <person name="Copeland A."/>
            <person name="Lucas S."/>
            <person name="Lapidus A."/>
            <person name="Barry K."/>
            <person name="Detter J.C."/>
            <person name="Glavina del Rio T."/>
            <person name="Hammon N."/>
            <person name="Israni S."/>
            <person name="Dalin E."/>
            <person name="Tice H."/>
            <person name="Pitluck S."/>
            <person name="Brettin T."/>
            <person name="Bruce D."/>
            <person name="Han C."/>
            <person name="Tapia R."/>
            <person name="Goodwin L."/>
            <person name="Thompson L.S."/>
            <person name="Gilna P."/>
            <person name="Schmutz J."/>
            <person name="Larimer F."/>
            <person name="Land M."/>
            <person name="Hauser L."/>
            <person name="Kyrpides N."/>
            <person name="Kim E."/>
            <person name="Belas R."/>
            <person name="Moran M.A."/>
            <person name="Buchan A."/>
            <person name="Gonzalez J.M."/>
            <person name="Schell M.A."/>
            <person name="Sun F."/>
            <person name="Richardson P."/>
        </authorList>
    </citation>
    <scope>NUCLEOTIDE SEQUENCE [LARGE SCALE GENOMIC DNA]</scope>
    <source>
        <strain>TM1040</strain>
    </source>
</reference>
<comment type="catalytic activity">
    <reaction evidence="1">
        <text>(6S)-5,6,7,8-tetrahydrofolate + formate + ATP = (6R)-10-formyltetrahydrofolate + ADP + phosphate</text>
        <dbReference type="Rhea" id="RHEA:20221"/>
        <dbReference type="ChEBI" id="CHEBI:15740"/>
        <dbReference type="ChEBI" id="CHEBI:30616"/>
        <dbReference type="ChEBI" id="CHEBI:43474"/>
        <dbReference type="ChEBI" id="CHEBI:57453"/>
        <dbReference type="ChEBI" id="CHEBI:195366"/>
        <dbReference type="ChEBI" id="CHEBI:456216"/>
        <dbReference type="EC" id="6.3.4.3"/>
    </reaction>
</comment>
<comment type="pathway">
    <text evidence="1">One-carbon metabolism; tetrahydrofolate interconversion.</text>
</comment>
<comment type="similarity">
    <text evidence="1">Belongs to the formate--tetrahydrofolate ligase family.</text>
</comment>